<proteinExistence type="inferred from homology"/>
<sequence>MKTKVGFNRLDRKSSHRKALLRNMVISLFRHEKITSTKAKLSEVKRFAEKLITRAKVDSVHNRREVSKFIHDKYILNKLFTRISPIFKERKGGYTRVIKLGQRYGDAAEMAILELVDKTLEEKQ</sequence>
<organism>
    <name type="scientific">Borrelia turicatae (strain 91E135)</name>
    <dbReference type="NCBI Taxonomy" id="314724"/>
    <lineage>
        <taxon>Bacteria</taxon>
        <taxon>Pseudomonadati</taxon>
        <taxon>Spirochaetota</taxon>
        <taxon>Spirochaetia</taxon>
        <taxon>Spirochaetales</taxon>
        <taxon>Borreliaceae</taxon>
        <taxon>Borrelia</taxon>
    </lineage>
</organism>
<gene>
    <name evidence="1" type="primary">rplQ</name>
    <name type="ordered locus">BT0503</name>
</gene>
<feature type="chain" id="PRO_1000184002" description="Large ribosomal subunit protein bL17">
    <location>
        <begin position="1"/>
        <end position="124"/>
    </location>
</feature>
<name>RL17_BORT9</name>
<evidence type="ECO:0000255" key="1">
    <source>
        <dbReference type="HAMAP-Rule" id="MF_01368"/>
    </source>
</evidence>
<evidence type="ECO:0000305" key="2"/>
<dbReference type="EMBL" id="CP000049">
    <property type="protein sequence ID" value="AAX17831.1"/>
    <property type="molecule type" value="Genomic_DNA"/>
</dbReference>
<dbReference type="RefSeq" id="WP_011772449.1">
    <property type="nucleotide sequence ID" value="NZ_CP073176.1"/>
</dbReference>
<dbReference type="SMR" id="A1QZT9"/>
<dbReference type="KEGG" id="btu:BT0503"/>
<dbReference type="eggNOG" id="COG0203">
    <property type="taxonomic scope" value="Bacteria"/>
</dbReference>
<dbReference type="HOGENOM" id="CLU_074407_2_0_12"/>
<dbReference type="Proteomes" id="UP000001205">
    <property type="component" value="Chromosome"/>
</dbReference>
<dbReference type="GO" id="GO:0022625">
    <property type="term" value="C:cytosolic large ribosomal subunit"/>
    <property type="evidence" value="ECO:0007669"/>
    <property type="project" value="TreeGrafter"/>
</dbReference>
<dbReference type="GO" id="GO:0003735">
    <property type="term" value="F:structural constituent of ribosome"/>
    <property type="evidence" value="ECO:0007669"/>
    <property type="project" value="InterPro"/>
</dbReference>
<dbReference type="GO" id="GO:0006412">
    <property type="term" value="P:translation"/>
    <property type="evidence" value="ECO:0007669"/>
    <property type="project" value="UniProtKB-UniRule"/>
</dbReference>
<dbReference type="Gene3D" id="3.90.1030.10">
    <property type="entry name" value="Ribosomal protein L17"/>
    <property type="match status" value="1"/>
</dbReference>
<dbReference type="HAMAP" id="MF_01368">
    <property type="entry name" value="Ribosomal_bL17"/>
    <property type="match status" value="1"/>
</dbReference>
<dbReference type="InterPro" id="IPR000456">
    <property type="entry name" value="Ribosomal_bL17"/>
</dbReference>
<dbReference type="InterPro" id="IPR036373">
    <property type="entry name" value="Ribosomal_bL17_sf"/>
</dbReference>
<dbReference type="NCBIfam" id="TIGR00059">
    <property type="entry name" value="L17"/>
    <property type="match status" value="1"/>
</dbReference>
<dbReference type="PANTHER" id="PTHR14413:SF16">
    <property type="entry name" value="LARGE RIBOSOMAL SUBUNIT PROTEIN BL17M"/>
    <property type="match status" value="1"/>
</dbReference>
<dbReference type="PANTHER" id="PTHR14413">
    <property type="entry name" value="RIBOSOMAL PROTEIN L17"/>
    <property type="match status" value="1"/>
</dbReference>
<dbReference type="Pfam" id="PF01196">
    <property type="entry name" value="Ribosomal_L17"/>
    <property type="match status" value="1"/>
</dbReference>
<dbReference type="SUPFAM" id="SSF64263">
    <property type="entry name" value="Prokaryotic ribosomal protein L17"/>
    <property type="match status" value="1"/>
</dbReference>
<protein>
    <recommendedName>
        <fullName evidence="1">Large ribosomal subunit protein bL17</fullName>
    </recommendedName>
    <alternativeName>
        <fullName evidence="2">50S ribosomal protein L17</fullName>
    </alternativeName>
</protein>
<reference key="1">
    <citation type="submission" date="2004-12" db="EMBL/GenBank/DDBJ databases">
        <title>The genome sequence of Borrelia hermsii and Borrelia turicatae: comparative analysis of two agents of endemic N. America relapsing fever.</title>
        <authorList>
            <person name="Porcella S.F."/>
            <person name="Raffel S.J."/>
            <person name="Schrumpf M.E."/>
            <person name="Montgomery B."/>
            <person name="Smith T."/>
            <person name="Schwan T.G."/>
        </authorList>
    </citation>
    <scope>NUCLEOTIDE SEQUENCE [LARGE SCALE GENOMIC DNA]</scope>
    <source>
        <strain>91E135</strain>
    </source>
</reference>
<keyword id="KW-1185">Reference proteome</keyword>
<keyword id="KW-0687">Ribonucleoprotein</keyword>
<keyword id="KW-0689">Ribosomal protein</keyword>
<comment type="subunit">
    <text evidence="1">Part of the 50S ribosomal subunit. Contacts protein L32.</text>
</comment>
<comment type="similarity">
    <text evidence="1">Belongs to the bacterial ribosomal protein bL17 family.</text>
</comment>
<accession>A1QZT9</accession>